<gene>
    <name evidence="1" type="primary">rpl14</name>
    <name type="ordered locus">Pars_1682</name>
</gene>
<name>RL14_PYRAR</name>
<sequence length="144" mass="15742">MAKRGGKRTVGVPYRFHVTPGIFMNSLVPVADNSGAKLVRVIGVVGHYSKTVHRRIPGAGVGDMVVVVVKEGKPELRRQIFRGIVVRQRRPYRRPDGTWVAFEDNAVVIVTPEGDPKGSEIHGPVAMEATLRWPTIANLASIVV</sequence>
<comment type="function">
    <text evidence="1">Binds to 23S rRNA. Forms part of two intersubunit bridges in the 70S ribosome.</text>
</comment>
<comment type="subunit">
    <text evidence="1">Part of the 50S ribosomal subunit. Forms a cluster with proteins L3 and L24e, part of which may contact the 16S rRNA in 2 intersubunit bridges.</text>
</comment>
<comment type="similarity">
    <text evidence="1">Belongs to the universal ribosomal protein uL14 family.</text>
</comment>
<accession>A4WLG6</accession>
<dbReference type="EMBL" id="CP000660">
    <property type="protein sequence ID" value="ABP51233.1"/>
    <property type="molecule type" value="Genomic_DNA"/>
</dbReference>
<dbReference type="SMR" id="A4WLG6"/>
<dbReference type="STRING" id="340102.Pars_1682"/>
<dbReference type="KEGG" id="pas:Pars_1682"/>
<dbReference type="HOGENOM" id="CLU_095071_3_0_2"/>
<dbReference type="OrthoDB" id="23569at2157"/>
<dbReference type="PhylomeDB" id="A4WLG6"/>
<dbReference type="Proteomes" id="UP000001567">
    <property type="component" value="Chromosome"/>
</dbReference>
<dbReference type="GO" id="GO:0022625">
    <property type="term" value="C:cytosolic large ribosomal subunit"/>
    <property type="evidence" value="ECO:0007669"/>
    <property type="project" value="TreeGrafter"/>
</dbReference>
<dbReference type="GO" id="GO:0070180">
    <property type="term" value="F:large ribosomal subunit rRNA binding"/>
    <property type="evidence" value="ECO:0007669"/>
    <property type="project" value="TreeGrafter"/>
</dbReference>
<dbReference type="GO" id="GO:0003735">
    <property type="term" value="F:structural constituent of ribosome"/>
    <property type="evidence" value="ECO:0007669"/>
    <property type="project" value="InterPro"/>
</dbReference>
<dbReference type="GO" id="GO:0006412">
    <property type="term" value="P:translation"/>
    <property type="evidence" value="ECO:0007669"/>
    <property type="project" value="UniProtKB-UniRule"/>
</dbReference>
<dbReference type="CDD" id="cd00337">
    <property type="entry name" value="Ribosomal_uL14"/>
    <property type="match status" value="1"/>
</dbReference>
<dbReference type="FunFam" id="2.40.150.20:FF:000007">
    <property type="entry name" value="50S ribosomal protein L14"/>
    <property type="match status" value="1"/>
</dbReference>
<dbReference type="Gene3D" id="2.40.150.20">
    <property type="entry name" value="Ribosomal protein L14"/>
    <property type="match status" value="1"/>
</dbReference>
<dbReference type="HAMAP" id="MF_01367">
    <property type="entry name" value="Ribosomal_uL14"/>
    <property type="match status" value="1"/>
</dbReference>
<dbReference type="InterPro" id="IPR000218">
    <property type="entry name" value="Ribosomal_uL14"/>
</dbReference>
<dbReference type="InterPro" id="IPR019971">
    <property type="entry name" value="Ribosomal_uL14_arc"/>
</dbReference>
<dbReference type="InterPro" id="IPR019972">
    <property type="entry name" value="Ribosomal_uL14_CS"/>
</dbReference>
<dbReference type="InterPro" id="IPR036853">
    <property type="entry name" value="Ribosomal_uL14_sf"/>
</dbReference>
<dbReference type="NCBIfam" id="NF006344">
    <property type="entry name" value="PRK08571.1"/>
    <property type="match status" value="1"/>
</dbReference>
<dbReference type="NCBIfam" id="TIGR03673">
    <property type="entry name" value="uL14_arch"/>
    <property type="match status" value="1"/>
</dbReference>
<dbReference type="PANTHER" id="PTHR11761">
    <property type="entry name" value="50S/60S RIBOSOMAL PROTEIN L14/L23"/>
    <property type="match status" value="1"/>
</dbReference>
<dbReference type="PANTHER" id="PTHR11761:SF8">
    <property type="entry name" value="LARGE RIBOSOMAL SUBUNIT PROTEIN UL14"/>
    <property type="match status" value="1"/>
</dbReference>
<dbReference type="Pfam" id="PF00238">
    <property type="entry name" value="Ribosomal_L14"/>
    <property type="match status" value="1"/>
</dbReference>
<dbReference type="SMART" id="SM01374">
    <property type="entry name" value="Ribosomal_L14"/>
    <property type="match status" value="1"/>
</dbReference>
<dbReference type="SUPFAM" id="SSF50193">
    <property type="entry name" value="Ribosomal protein L14"/>
    <property type="match status" value="1"/>
</dbReference>
<dbReference type="PROSITE" id="PS00049">
    <property type="entry name" value="RIBOSOMAL_L14"/>
    <property type="match status" value="1"/>
</dbReference>
<evidence type="ECO:0000255" key="1">
    <source>
        <dbReference type="HAMAP-Rule" id="MF_01367"/>
    </source>
</evidence>
<evidence type="ECO:0000305" key="2"/>
<proteinExistence type="inferred from homology"/>
<organism>
    <name type="scientific">Pyrobaculum arsenaticum (strain DSM 13514 / JCM 11321 / PZ6)</name>
    <dbReference type="NCBI Taxonomy" id="340102"/>
    <lineage>
        <taxon>Archaea</taxon>
        <taxon>Thermoproteota</taxon>
        <taxon>Thermoprotei</taxon>
        <taxon>Thermoproteales</taxon>
        <taxon>Thermoproteaceae</taxon>
        <taxon>Pyrobaculum</taxon>
    </lineage>
</organism>
<protein>
    <recommendedName>
        <fullName evidence="1">Large ribosomal subunit protein uL14</fullName>
    </recommendedName>
    <alternativeName>
        <fullName evidence="2">50S ribosomal protein L14</fullName>
    </alternativeName>
</protein>
<reference key="1">
    <citation type="submission" date="2007-04" db="EMBL/GenBank/DDBJ databases">
        <title>Complete sequence of Pyrobaculum arsenaticum DSM 13514.</title>
        <authorList>
            <consortium name="US DOE Joint Genome Institute"/>
            <person name="Copeland A."/>
            <person name="Lucas S."/>
            <person name="Lapidus A."/>
            <person name="Barry K."/>
            <person name="Glavina del Rio T."/>
            <person name="Dalin E."/>
            <person name="Tice H."/>
            <person name="Pitluck S."/>
            <person name="Chain P."/>
            <person name="Malfatti S."/>
            <person name="Shin M."/>
            <person name="Vergez L."/>
            <person name="Schmutz J."/>
            <person name="Larimer F."/>
            <person name="Land M."/>
            <person name="Hauser L."/>
            <person name="Kyrpides N."/>
            <person name="Mikhailova N."/>
            <person name="Cozen A.E."/>
            <person name="Fitz-Gibbon S.T."/>
            <person name="House C.H."/>
            <person name="Saltikov C."/>
            <person name="Lowe T.M."/>
            <person name="Richardson P."/>
        </authorList>
    </citation>
    <scope>NUCLEOTIDE SEQUENCE [LARGE SCALE GENOMIC DNA]</scope>
    <source>
        <strain>ATCC 700994 / DSM 13514 / JCM 11321 / PZ6</strain>
    </source>
</reference>
<feature type="chain" id="PRO_0000355852" description="Large ribosomal subunit protein uL14">
    <location>
        <begin position="1"/>
        <end position="144"/>
    </location>
</feature>
<keyword id="KW-0687">Ribonucleoprotein</keyword>
<keyword id="KW-0689">Ribosomal protein</keyword>
<keyword id="KW-0694">RNA-binding</keyword>
<keyword id="KW-0699">rRNA-binding</keyword>